<keyword id="KW-0489">Methyltransferase</keyword>
<keyword id="KW-1185">Reference proteome</keyword>
<keyword id="KW-0949">S-adenosyl-L-methionine</keyword>
<keyword id="KW-0808">Transferase</keyword>
<keyword id="KW-0819">tRNA processing</keyword>
<organism>
    <name type="scientific">Desulfitobacterium hafniense (strain Y51)</name>
    <dbReference type="NCBI Taxonomy" id="138119"/>
    <lineage>
        <taxon>Bacteria</taxon>
        <taxon>Bacillati</taxon>
        <taxon>Bacillota</taxon>
        <taxon>Clostridia</taxon>
        <taxon>Eubacteriales</taxon>
        <taxon>Desulfitobacteriaceae</taxon>
        <taxon>Desulfitobacterium</taxon>
    </lineage>
</organism>
<comment type="function">
    <text evidence="1">Catalyzes the formation of N(7)-methylguanine at position 46 (m7G46) in tRNA.</text>
</comment>
<comment type="catalytic activity">
    <reaction evidence="1">
        <text>guanosine(46) in tRNA + S-adenosyl-L-methionine = N(7)-methylguanosine(46) in tRNA + S-adenosyl-L-homocysteine</text>
        <dbReference type="Rhea" id="RHEA:42708"/>
        <dbReference type="Rhea" id="RHEA-COMP:10188"/>
        <dbReference type="Rhea" id="RHEA-COMP:10189"/>
        <dbReference type="ChEBI" id="CHEBI:57856"/>
        <dbReference type="ChEBI" id="CHEBI:59789"/>
        <dbReference type="ChEBI" id="CHEBI:74269"/>
        <dbReference type="ChEBI" id="CHEBI:74480"/>
        <dbReference type="EC" id="2.1.1.33"/>
    </reaction>
</comment>
<comment type="pathway">
    <text evidence="1">tRNA modification; N(7)-methylguanine-tRNA biosynthesis.</text>
</comment>
<comment type="similarity">
    <text evidence="1">Belongs to the class I-like SAM-binding methyltransferase superfamily. TrmB family.</text>
</comment>
<sequence>MRLRRKAWARPELESDPKVIYNPMHYKENWQEAFGNNHPVHLELGCGRGQFINQCAELNPHINYIAIDLYDEVLVKALRKINEKALHNVRVIPMNIAKLESIFKHDQIEKIYINFCNPWPSRRHHHKRLTHPQFLSVYKKLMKDHSEIWFKTDDDELFKDSLKYFAEAGFIEKYRTFDLHQSEFTENIKTEYEEKFSNQGVKIKFGIFVVNKGRQN</sequence>
<name>TRMB_DESHY</name>
<feature type="chain" id="PRO_0000288145" description="tRNA (guanine-N(7)-)-methyltransferase">
    <location>
        <begin position="1"/>
        <end position="216"/>
    </location>
</feature>
<feature type="binding site" evidence="1">
    <location>
        <position position="43"/>
    </location>
    <ligand>
        <name>S-adenosyl-L-methionine</name>
        <dbReference type="ChEBI" id="CHEBI:59789"/>
    </ligand>
</feature>
<feature type="binding site" evidence="1">
    <location>
        <position position="68"/>
    </location>
    <ligand>
        <name>S-adenosyl-L-methionine</name>
        <dbReference type="ChEBI" id="CHEBI:59789"/>
    </ligand>
</feature>
<feature type="binding site" evidence="1">
    <location>
        <position position="95"/>
    </location>
    <ligand>
        <name>S-adenosyl-L-methionine</name>
        <dbReference type="ChEBI" id="CHEBI:59789"/>
    </ligand>
</feature>
<feature type="binding site" evidence="1">
    <location>
        <position position="117"/>
    </location>
    <ligand>
        <name>S-adenosyl-L-methionine</name>
        <dbReference type="ChEBI" id="CHEBI:59789"/>
    </ligand>
</feature>
<feature type="binding site" evidence="1">
    <location>
        <position position="153"/>
    </location>
    <ligand>
        <name>substrate</name>
    </ligand>
</feature>
<feature type="binding site" evidence="1">
    <location>
        <begin position="190"/>
        <end position="193"/>
    </location>
    <ligand>
        <name>substrate</name>
    </ligand>
</feature>
<proteinExistence type="inferred from homology"/>
<dbReference type="EC" id="2.1.1.33" evidence="1"/>
<dbReference type="EMBL" id="AP008230">
    <property type="protein sequence ID" value="BAE83792.1"/>
    <property type="molecule type" value="Genomic_DNA"/>
</dbReference>
<dbReference type="RefSeq" id="WP_011459987.1">
    <property type="nucleotide sequence ID" value="NC_007907.1"/>
</dbReference>
<dbReference type="SMR" id="Q24W00"/>
<dbReference type="STRING" id="138119.DSY2003"/>
<dbReference type="KEGG" id="dsy:DSY2003"/>
<dbReference type="eggNOG" id="COG0220">
    <property type="taxonomic scope" value="Bacteria"/>
</dbReference>
<dbReference type="HOGENOM" id="CLU_050910_2_1_9"/>
<dbReference type="UniPathway" id="UPA00989"/>
<dbReference type="Proteomes" id="UP000001946">
    <property type="component" value="Chromosome"/>
</dbReference>
<dbReference type="GO" id="GO:0043527">
    <property type="term" value="C:tRNA methyltransferase complex"/>
    <property type="evidence" value="ECO:0007669"/>
    <property type="project" value="TreeGrafter"/>
</dbReference>
<dbReference type="GO" id="GO:0008176">
    <property type="term" value="F:tRNA (guanine(46)-N7)-methyltransferase activity"/>
    <property type="evidence" value="ECO:0007669"/>
    <property type="project" value="UniProtKB-UniRule"/>
</dbReference>
<dbReference type="CDD" id="cd02440">
    <property type="entry name" value="AdoMet_MTases"/>
    <property type="match status" value="1"/>
</dbReference>
<dbReference type="FunFam" id="3.40.50.150:FF:000035">
    <property type="entry name" value="tRNA (guanine-N(7)-)-methyltransferase"/>
    <property type="match status" value="1"/>
</dbReference>
<dbReference type="Gene3D" id="3.40.50.150">
    <property type="entry name" value="Vaccinia Virus protein VP39"/>
    <property type="match status" value="1"/>
</dbReference>
<dbReference type="HAMAP" id="MF_01057">
    <property type="entry name" value="tRNA_methyltr_TrmB"/>
    <property type="match status" value="1"/>
</dbReference>
<dbReference type="InterPro" id="IPR029063">
    <property type="entry name" value="SAM-dependent_MTases_sf"/>
</dbReference>
<dbReference type="InterPro" id="IPR003358">
    <property type="entry name" value="tRNA_(Gua-N-7)_MeTrfase_Trmb"/>
</dbReference>
<dbReference type="InterPro" id="IPR055361">
    <property type="entry name" value="tRNA_methyltr_TrmB_bact"/>
</dbReference>
<dbReference type="NCBIfam" id="NF001080">
    <property type="entry name" value="PRK00121.2-2"/>
    <property type="match status" value="1"/>
</dbReference>
<dbReference type="NCBIfam" id="TIGR00091">
    <property type="entry name" value="tRNA (guanosine(46)-N7)-methyltransferase TrmB"/>
    <property type="match status" value="1"/>
</dbReference>
<dbReference type="PANTHER" id="PTHR23417">
    <property type="entry name" value="3-DEOXY-D-MANNO-OCTULOSONIC-ACID TRANSFERASE/TRNA GUANINE-N 7 - -METHYLTRANSFERASE"/>
    <property type="match status" value="1"/>
</dbReference>
<dbReference type="PANTHER" id="PTHR23417:SF14">
    <property type="entry name" value="PENTACOTRIPEPTIDE-REPEAT REGION OF PRORP DOMAIN-CONTAINING PROTEIN"/>
    <property type="match status" value="1"/>
</dbReference>
<dbReference type="Pfam" id="PF02390">
    <property type="entry name" value="Methyltransf_4"/>
    <property type="match status" value="1"/>
</dbReference>
<dbReference type="SUPFAM" id="SSF53335">
    <property type="entry name" value="S-adenosyl-L-methionine-dependent methyltransferases"/>
    <property type="match status" value="1"/>
</dbReference>
<dbReference type="PROSITE" id="PS51625">
    <property type="entry name" value="SAM_MT_TRMB"/>
    <property type="match status" value="1"/>
</dbReference>
<accession>Q24W00</accession>
<gene>
    <name evidence="1" type="primary">trmB</name>
    <name type="ordered locus">DSY2003</name>
</gene>
<evidence type="ECO:0000255" key="1">
    <source>
        <dbReference type="HAMAP-Rule" id="MF_01057"/>
    </source>
</evidence>
<reference key="1">
    <citation type="journal article" date="2006" name="J. Bacteriol.">
        <title>Complete genome sequence of the dehalorespiring bacterium Desulfitobacterium hafniense Y51 and comparison with Dehalococcoides ethenogenes 195.</title>
        <authorList>
            <person name="Nonaka H."/>
            <person name="Keresztes G."/>
            <person name="Shinoda Y."/>
            <person name="Ikenaga Y."/>
            <person name="Abe M."/>
            <person name="Naito K."/>
            <person name="Inatomi K."/>
            <person name="Furukawa K."/>
            <person name="Inui M."/>
            <person name="Yukawa H."/>
        </authorList>
    </citation>
    <scope>NUCLEOTIDE SEQUENCE [LARGE SCALE GENOMIC DNA]</scope>
    <source>
        <strain>Y51</strain>
    </source>
</reference>
<protein>
    <recommendedName>
        <fullName evidence="1">tRNA (guanine-N(7)-)-methyltransferase</fullName>
        <ecNumber evidence="1">2.1.1.33</ecNumber>
    </recommendedName>
    <alternativeName>
        <fullName evidence="1">tRNA (guanine(46)-N(7))-methyltransferase</fullName>
    </alternativeName>
    <alternativeName>
        <fullName evidence="1">tRNA(m7G46)-methyltransferase</fullName>
    </alternativeName>
</protein>